<dbReference type="EC" id="1.1.1.41" evidence="9"/>
<dbReference type="EMBL" id="AC015985">
    <property type="protein sequence ID" value="AAF23254.1"/>
    <property type="molecule type" value="Genomic_DNA"/>
</dbReference>
<dbReference type="EMBL" id="CP002686">
    <property type="protein sequence ID" value="AEE74815.1"/>
    <property type="molecule type" value="Genomic_DNA"/>
</dbReference>
<dbReference type="EMBL" id="AF324664">
    <property type="protein sequence ID" value="AAG40015.1"/>
    <property type="molecule type" value="mRNA"/>
</dbReference>
<dbReference type="EMBL" id="AF327427">
    <property type="protein sequence ID" value="AAG42017.1"/>
    <property type="molecule type" value="mRNA"/>
</dbReference>
<dbReference type="EMBL" id="AF339723">
    <property type="protein sequence ID" value="AAK00405.1"/>
    <property type="molecule type" value="mRNA"/>
</dbReference>
<dbReference type="EMBL" id="AK176269">
    <property type="protein sequence ID" value="BAD44032.1"/>
    <property type="molecule type" value="mRNA"/>
</dbReference>
<dbReference type="EMBL" id="AK228113">
    <property type="protein sequence ID" value="BAF00071.1"/>
    <property type="molecule type" value="mRNA"/>
</dbReference>
<dbReference type="EMBL" id="AY084425">
    <property type="protein sequence ID" value="AAM60999.1"/>
    <property type="molecule type" value="mRNA"/>
</dbReference>
<dbReference type="RefSeq" id="NP_850549.1">
    <property type="nucleotide sequence ID" value="NM_180218.2"/>
</dbReference>
<dbReference type="SMR" id="Q8LG77"/>
<dbReference type="BioGRID" id="5473">
    <property type="interactions" value="8"/>
</dbReference>
<dbReference type="FunCoup" id="Q8LG77">
    <property type="interactions" value="2866"/>
</dbReference>
<dbReference type="STRING" id="3702.Q8LG77"/>
<dbReference type="MetOSite" id="Q8LG77"/>
<dbReference type="PaxDb" id="3702-AT3G09810.1"/>
<dbReference type="ProteomicsDB" id="248619"/>
<dbReference type="EnsemblPlants" id="AT3G09810.1">
    <property type="protein sequence ID" value="AT3G09810.1"/>
    <property type="gene ID" value="AT3G09810"/>
</dbReference>
<dbReference type="GeneID" id="820139"/>
<dbReference type="Gramene" id="AT3G09810.1">
    <property type="protein sequence ID" value="AT3G09810.1"/>
    <property type="gene ID" value="AT3G09810"/>
</dbReference>
<dbReference type="KEGG" id="ath:AT3G09810"/>
<dbReference type="Araport" id="AT3G09810"/>
<dbReference type="TAIR" id="AT3G09810">
    <property type="gene designation" value="IDH-VI"/>
</dbReference>
<dbReference type="eggNOG" id="KOG0785">
    <property type="taxonomic scope" value="Eukaryota"/>
</dbReference>
<dbReference type="HOGENOM" id="CLU_031953_0_1_1"/>
<dbReference type="InParanoid" id="Q8LG77"/>
<dbReference type="OMA" id="MIPHDAK"/>
<dbReference type="OrthoDB" id="10261637at2759"/>
<dbReference type="PhylomeDB" id="Q8LG77"/>
<dbReference type="BRENDA" id="1.1.1.41">
    <property type="organism ID" value="399"/>
</dbReference>
<dbReference type="PRO" id="PR:Q8LG77"/>
<dbReference type="Proteomes" id="UP000006548">
    <property type="component" value="Chromosome 3"/>
</dbReference>
<dbReference type="ExpressionAtlas" id="Q8LG77">
    <property type="expression patterns" value="baseline and differential"/>
</dbReference>
<dbReference type="GO" id="GO:0005829">
    <property type="term" value="C:cytosol"/>
    <property type="evidence" value="ECO:0007005"/>
    <property type="project" value="TAIR"/>
</dbReference>
<dbReference type="GO" id="GO:0005739">
    <property type="term" value="C:mitochondrion"/>
    <property type="evidence" value="ECO:0007005"/>
    <property type="project" value="TAIR"/>
</dbReference>
<dbReference type="GO" id="GO:0004449">
    <property type="term" value="F:isocitrate dehydrogenase (NAD+) activity"/>
    <property type="evidence" value="ECO:0000316"/>
    <property type="project" value="TAIR"/>
</dbReference>
<dbReference type="GO" id="GO:0000287">
    <property type="term" value="F:magnesium ion binding"/>
    <property type="evidence" value="ECO:0007669"/>
    <property type="project" value="InterPro"/>
</dbReference>
<dbReference type="GO" id="GO:0051287">
    <property type="term" value="F:NAD binding"/>
    <property type="evidence" value="ECO:0007669"/>
    <property type="project" value="InterPro"/>
</dbReference>
<dbReference type="GO" id="GO:0006102">
    <property type="term" value="P:isocitrate metabolic process"/>
    <property type="evidence" value="ECO:0000316"/>
    <property type="project" value="TAIR"/>
</dbReference>
<dbReference type="GO" id="GO:0006099">
    <property type="term" value="P:tricarboxylic acid cycle"/>
    <property type="evidence" value="ECO:0000304"/>
    <property type="project" value="TAIR"/>
</dbReference>
<dbReference type="FunFam" id="3.40.718.10:FF:000003">
    <property type="entry name" value="Isocitrate dehydrogenase [NAD] subunit, mitochondrial"/>
    <property type="match status" value="1"/>
</dbReference>
<dbReference type="Gene3D" id="3.40.718.10">
    <property type="entry name" value="Isopropylmalate Dehydrogenase"/>
    <property type="match status" value="1"/>
</dbReference>
<dbReference type="InterPro" id="IPR019818">
    <property type="entry name" value="IsoCit/isopropylmalate_DH_CS"/>
</dbReference>
<dbReference type="InterPro" id="IPR004434">
    <property type="entry name" value="Isocitrate_DH_NAD"/>
</dbReference>
<dbReference type="InterPro" id="IPR024084">
    <property type="entry name" value="IsoPropMal-DH-like_dom"/>
</dbReference>
<dbReference type="NCBIfam" id="TIGR00175">
    <property type="entry name" value="mito_nad_idh"/>
    <property type="match status" value="1"/>
</dbReference>
<dbReference type="PANTHER" id="PTHR11835">
    <property type="entry name" value="DECARBOXYLATING DEHYDROGENASES-ISOCITRATE, ISOPROPYLMALATE, TARTRATE"/>
    <property type="match status" value="1"/>
</dbReference>
<dbReference type="PANTHER" id="PTHR11835:SF61">
    <property type="entry name" value="ISOCITRATE DEHYDROGENASE [NAD] CATALYTIC SUBUNIT 6, MITOCHONDRIAL"/>
    <property type="match status" value="1"/>
</dbReference>
<dbReference type="Pfam" id="PF00180">
    <property type="entry name" value="Iso_dh"/>
    <property type="match status" value="1"/>
</dbReference>
<dbReference type="SMART" id="SM01329">
    <property type="entry name" value="Iso_dh"/>
    <property type="match status" value="1"/>
</dbReference>
<dbReference type="SUPFAM" id="SSF53659">
    <property type="entry name" value="Isocitrate/Isopropylmalate dehydrogenase-like"/>
    <property type="match status" value="1"/>
</dbReference>
<dbReference type="PROSITE" id="PS00470">
    <property type="entry name" value="IDH_IMDH"/>
    <property type="match status" value="1"/>
</dbReference>
<accession>Q8LG77</accession>
<accession>Q9SF84</accession>
<name>IDH6_ARATH</name>
<feature type="transit peptide" description="Mitochondrion" evidence="4">
    <location>
        <begin position="1"/>
        <end position="44"/>
    </location>
</feature>
<feature type="chain" id="PRO_0000271292" description="Isocitrate dehydrogenase [NAD] catalytic subunit 6, mitochondrial">
    <location>
        <begin position="45"/>
        <end position="374"/>
    </location>
</feature>
<feature type="binding site" evidence="1">
    <location>
        <position position="127"/>
    </location>
    <ligand>
        <name>substrate</name>
    </ligand>
</feature>
<feature type="binding site" evidence="1">
    <location>
        <position position="137"/>
    </location>
    <ligand>
        <name>substrate</name>
    </ligand>
</feature>
<feature type="binding site" evidence="1">
    <location>
        <position position="158"/>
    </location>
    <ligand>
        <name>substrate</name>
    </ligand>
</feature>
<feature type="binding site" evidence="2">
    <location>
        <position position="245"/>
    </location>
    <ligand>
        <name>Mg(2+)</name>
        <dbReference type="ChEBI" id="CHEBI:18420"/>
    </ligand>
</feature>
<feature type="binding site" evidence="1">
    <location>
        <position position="245"/>
    </location>
    <ligand>
        <name>substrate</name>
    </ligand>
</feature>
<feature type="binding site" evidence="2">
    <location>
        <position position="269"/>
    </location>
    <ligand>
        <name>Mg(2+)</name>
        <dbReference type="ChEBI" id="CHEBI:18420"/>
    </ligand>
</feature>
<feature type="binding site" evidence="2">
    <location>
        <position position="273"/>
    </location>
    <ligand>
        <name>Mg(2+)</name>
        <dbReference type="ChEBI" id="CHEBI:18420"/>
    </ligand>
</feature>
<feature type="site" description="Critical for catalysis" evidence="1">
    <location>
        <position position="165"/>
    </location>
</feature>
<feature type="site" description="Critical for catalysis" evidence="1">
    <location>
        <position position="212"/>
    </location>
</feature>
<feature type="sequence conflict" description="In Ref. 5; AAM60999." evidence="8" ref="5">
    <original>M</original>
    <variation>I</variation>
    <location>
        <position position="3"/>
    </location>
</feature>
<keyword id="KW-0460">Magnesium</keyword>
<keyword id="KW-0464">Manganese</keyword>
<keyword id="KW-0479">Metal-binding</keyword>
<keyword id="KW-0496">Mitochondrion</keyword>
<keyword id="KW-0520">NAD</keyword>
<keyword id="KW-0560">Oxidoreductase</keyword>
<keyword id="KW-1185">Reference proteome</keyword>
<keyword id="KW-0809">Transit peptide</keyword>
<keyword id="KW-0816">Tricarboxylic acid cycle</keyword>
<proteinExistence type="evidence at protein level"/>
<comment type="function">
    <text evidence="3 9">Catalytic subunit of the NAD(+)-dependent isocitrate dehydrogenase involved in the oxidative decarboxylation of isocitrate to 2-oxoglutarate (Probable). Performs an essential role in the oxidative function of the citric acid cycle.</text>
</comment>
<comment type="catalytic activity">
    <reaction evidence="9">
        <text>D-threo-isocitrate + NAD(+) = 2-oxoglutarate + CO2 + NADH</text>
        <dbReference type="Rhea" id="RHEA:23632"/>
        <dbReference type="ChEBI" id="CHEBI:15562"/>
        <dbReference type="ChEBI" id="CHEBI:16526"/>
        <dbReference type="ChEBI" id="CHEBI:16810"/>
        <dbReference type="ChEBI" id="CHEBI:57540"/>
        <dbReference type="ChEBI" id="CHEBI:57945"/>
        <dbReference type="EC" id="1.1.1.41"/>
    </reaction>
    <physiologicalReaction direction="left-to-right" evidence="9">
        <dbReference type="Rhea" id="RHEA:23633"/>
    </physiologicalReaction>
</comment>
<comment type="cofactor">
    <cofactor evidence="1">
        <name>Mg(2+)</name>
        <dbReference type="ChEBI" id="CHEBI:18420"/>
    </cofactor>
    <cofactor evidence="1">
        <name>Mn(2+)</name>
        <dbReference type="ChEBI" id="CHEBI:29035"/>
    </cofactor>
    <text evidence="1">Binds 1 Mg(2+) or Mn(2+) ion per subunit.</text>
</comment>
<comment type="subunit">
    <text evidence="9">Heterooligomer of catalytic and regulatory subunits.</text>
</comment>
<comment type="subcellular location">
    <subcellularLocation>
        <location evidence="5">Mitochondrion</location>
    </subcellularLocation>
</comment>
<comment type="tissue specificity">
    <text evidence="6">Ubiquitous. Predominantly expressed in leaves.</text>
</comment>
<comment type="similarity">
    <text evidence="8">Belongs to the isocitrate and isopropylmalate dehydrogenases family.</text>
</comment>
<gene>
    <name type="primary">IDH6</name>
    <name type="ordered locus">At3g09810</name>
    <name type="ORF">F8A24.14</name>
</gene>
<organism>
    <name type="scientific">Arabidopsis thaliana</name>
    <name type="common">Mouse-ear cress</name>
    <dbReference type="NCBI Taxonomy" id="3702"/>
    <lineage>
        <taxon>Eukaryota</taxon>
        <taxon>Viridiplantae</taxon>
        <taxon>Streptophyta</taxon>
        <taxon>Embryophyta</taxon>
        <taxon>Tracheophyta</taxon>
        <taxon>Spermatophyta</taxon>
        <taxon>Magnoliopsida</taxon>
        <taxon>eudicotyledons</taxon>
        <taxon>Gunneridae</taxon>
        <taxon>Pentapetalae</taxon>
        <taxon>rosids</taxon>
        <taxon>malvids</taxon>
        <taxon>Brassicales</taxon>
        <taxon>Brassicaceae</taxon>
        <taxon>Camelineae</taxon>
        <taxon>Arabidopsis</taxon>
    </lineage>
</organism>
<sequence>MTMTAFLARRLIGNGSSQILGTSSSSSGPFISVSRAFFSSSTPIKATLFPGDGIGPEIAESVKQVFTAADVVIDWDEQFVGTEVDPRTNSFLTWDNLQSVLKNKVGLKGPMATPIGKGHRSLNLTLRKELNLYANVRPCYSLPGYKTRYDDVDLITIRENTEGEYSGLEHQVVKGVVESLKIITRKASMRVAEYAFLYAKTHGRKKVSAIHKANIMQKTDGLFLQCCDEVAAKYPEIYYEKVVIDNCCMMLVKNPALFDVLVMPNLYGDIISDLCAGLVGGLGLTPSMNIGEDGIALAEAVHGSAPDIAGMNLANPTALLLSGVMMLRHLKLNKQAEQIHSAIINTIAEGKYRTADLGGSSTTTDFTKAICDHL</sequence>
<protein>
    <recommendedName>
        <fullName>Isocitrate dehydrogenase [NAD] catalytic subunit 6, mitochondrial</fullName>
        <ecNumber evidence="9">1.1.1.41</ecNumber>
    </recommendedName>
    <alternativeName>
        <fullName evidence="7">IDH-VI</fullName>
    </alternativeName>
    <alternativeName>
        <fullName>Isocitric dehydrogenase 6</fullName>
    </alternativeName>
    <alternativeName>
        <fullName>NAD(+)-specific ICDH 6</fullName>
    </alternativeName>
</protein>
<reference key="1">
    <citation type="journal article" date="2000" name="Nature">
        <title>Sequence and analysis of chromosome 3 of the plant Arabidopsis thaliana.</title>
        <authorList>
            <person name="Salanoubat M."/>
            <person name="Lemcke K."/>
            <person name="Rieger M."/>
            <person name="Ansorge W."/>
            <person name="Unseld M."/>
            <person name="Fartmann B."/>
            <person name="Valle G."/>
            <person name="Bloecker H."/>
            <person name="Perez-Alonso M."/>
            <person name="Obermaier B."/>
            <person name="Delseny M."/>
            <person name="Boutry M."/>
            <person name="Grivell L.A."/>
            <person name="Mache R."/>
            <person name="Puigdomenech P."/>
            <person name="De Simone V."/>
            <person name="Choisne N."/>
            <person name="Artiguenave F."/>
            <person name="Robert C."/>
            <person name="Brottier P."/>
            <person name="Wincker P."/>
            <person name="Cattolico L."/>
            <person name="Weissenbach J."/>
            <person name="Saurin W."/>
            <person name="Quetier F."/>
            <person name="Schaefer M."/>
            <person name="Mueller-Auer S."/>
            <person name="Gabel C."/>
            <person name="Fuchs M."/>
            <person name="Benes V."/>
            <person name="Wurmbach E."/>
            <person name="Drzonek H."/>
            <person name="Erfle H."/>
            <person name="Jordan N."/>
            <person name="Bangert S."/>
            <person name="Wiedelmann R."/>
            <person name="Kranz H."/>
            <person name="Voss H."/>
            <person name="Holland R."/>
            <person name="Brandt P."/>
            <person name="Nyakatura G."/>
            <person name="Vezzi A."/>
            <person name="D'Angelo M."/>
            <person name="Pallavicini A."/>
            <person name="Toppo S."/>
            <person name="Simionati B."/>
            <person name="Conrad A."/>
            <person name="Hornischer K."/>
            <person name="Kauer G."/>
            <person name="Loehnert T.-H."/>
            <person name="Nordsiek G."/>
            <person name="Reichelt J."/>
            <person name="Scharfe M."/>
            <person name="Schoen O."/>
            <person name="Bargues M."/>
            <person name="Terol J."/>
            <person name="Climent J."/>
            <person name="Navarro P."/>
            <person name="Collado C."/>
            <person name="Perez-Perez A."/>
            <person name="Ottenwaelder B."/>
            <person name="Duchemin D."/>
            <person name="Cooke R."/>
            <person name="Laudie M."/>
            <person name="Berger-Llauro C."/>
            <person name="Purnelle B."/>
            <person name="Masuy D."/>
            <person name="de Haan M."/>
            <person name="Maarse A.C."/>
            <person name="Alcaraz J.-P."/>
            <person name="Cottet A."/>
            <person name="Casacuberta E."/>
            <person name="Monfort A."/>
            <person name="Argiriou A."/>
            <person name="Flores M."/>
            <person name="Liguori R."/>
            <person name="Vitale D."/>
            <person name="Mannhaupt G."/>
            <person name="Haase D."/>
            <person name="Schoof H."/>
            <person name="Rudd S."/>
            <person name="Zaccaria P."/>
            <person name="Mewes H.-W."/>
            <person name="Mayer K.F.X."/>
            <person name="Kaul S."/>
            <person name="Town C.D."/>
            <person name="Koo H.L."/>
            <person name="Tallon L.J."/>
            <person name="Jenkins J."/>
            <person name="Rooney T."/>
            <person name="Rizzo M."/>
            <person name="Walts A."/>
            <person name="Utterback T."/>
            <person name="Fujii C.Y."/>
            <person name="Shea T.P."/>
            <person name="Creasy T.H."/>
            <person name="Haas B."/>
            <person name="Maiti R."/>
            <person name="Wu D."/>
            <person name="Peterson J."/>
            <person name="Van Aken S."/>
            <person name="Pai G."/>
            <person name="Militscher J."/>
            <person name="Sellers P."/>
            <person name="Gill J.E."/>
            <person name="Feldblyum T.V."/>
            <person name="Preuss D."/>
            <person name="Lin X."/>
            <person name="Nierman W.C."/>
            <person name="Salzberg S.L."/>
            <person name="White O."/>
            <person name="Venter J.C."/>
            <person name="Fraser C.M."/>
            <person name="Kaneko T."/>
            <person name="Nakamura Y."/>
            <person name="Sato S."/>
            <person name="Kato T."/>
            <person name="Asamizu E."/>
            <person name="Sasamoto S."/>
            <person name="Kimura T."/>
            <person name="Idesawa K."/>
            <person name="Kawashima K."/>
            <person name="Kishida Y."/>
            <person name="Kiyokawa C."/>
            <person name="Kohara M."/>
            <person name="Matsumoto M."/>
            <person name="Matsuno A."/>
            <person name="Muraki A."/>
            <person name="Nakayama S."/>
            <person name="Nakazaki N."/>
            <person name="Shinpo S."/>
            <person name="Takeuchi C."/>
            <person name="Wada T."/>
            <person name="Watanabe A."/>
            <person name="Yamada M."/>
            <person name="Yasuda M."/>
            <person name="Tabata S."/>
        </authorList>
    </citation>
    <scope>NUCLEOTIDE SEQUENCE [LARGE SCALE GENOMIC DNA]</scope>
    <source>
        <strain>cv. Columbia</strain>
    </source>
</reference>
<reference key="2">
    <citation type="journal article" date="2017" name="Plant J.">
        <title>Araport11: a complete reannotation of the Arabidopsis thaliana reference genome.</title>
        <authorList>
            <person name="Cheng C.Y."/>
            <person name="Krishnakumar V."/>
            <person name="Chan A.P."/>
            <person name="Thibaud-Nissen F."/>
            <person name="Schobel S."/>
            <person name="Town C.D."/>
        </authorList>
    </citation>
    <scope>GENOME REANNOTATION</scope>
    <source>
        <strain>cv. Columbia</strain>
    </source>
</reference>
<reference key="3">
    <citation type="journal article" date="2003" name="Science">
        <title>Empirical analysis of transcriptional activity in the Arabidopsis genome.</title>
        <authorList>
            <person name="Yamada K."/>
            <person name="Lim J."/>
            <person name="Dale J.M."/>
            <person name="Chen H."/>
            <person name="Shinn P."/>
            <person name="Palm C.J."/>
            <person name="Southwick A.M."/>
            <person name="Wu H.C."/>
            <person name="Kim C.J."/>
            <person name="Nguyen M."/>
            <person name="Pham P.K."/>
            <person name="Cheuk R.F."/>
            <person name="Karlin-Newmann G."/>
            <person name="Liu S.X."/>
            <person name="Lam B."/>
            <person name="Sakano H."/>
            <person name="Wu T."/>
            <person name="Yu G."/>
            <person name="Miranda M."/>
            <person name="Quach H.L."/>
            <person name="Tripp M."/>
            <person name="Chang C.H."/>
            <person name="Lee J.M."/>
            <person name="Toriumi M.J."/>
            <person name="Chan M.M."/>
            <person name="Tang C.C."/>
            <person name="Onodera C.S."/>
            <person name="Deng J.M."/>
            <person name="Akiyama K."/>
            <person name="Ansari Y."/>
            <person name="Arakawa T."/>
            <person name="Banh J."/>
            <person name="Banno F."/>
            <person name="Bowser L."/>
            <person name="Brooks S.Y."/>
            <person name="Carninci P."/>
            <person name="Chao Q."/>
            <person name="Choy N."/>
            <person name="Enju A."/>
            <person name="Goldsmith A.D."/>
            <person name="Gurjal M."/>
            <person name="Hansen N.F."/>
            <person name="Hayashizaki Y."/>
            <person name="Johnson-Hopson C."/>
            <person name="Hsuan V.W."/>
            <person name="Iida K."/>
            <person name="Karnes M."/>
            <person name="Khan S."/>
            <person name="Koesema E."/>
            <person name="Ishida J."/>
            <person name="Jiang P.X."/>
            <person name="Jones T."/>
            <person name="Kawai J."/>
            <person name="Kamiya A."/>
            <person name="Meyers C."/>
            <person name="Nakajima M."/>
            <person name="Narusaka M."/>
            <person name="Seki M."/>
            <person name="Sakurai T."/>
            <person name="Satou M."/>
            <person name="Tamse R."/>
            <person name="Vaysberg M."/>
            <person name="Wallender E.K."/>
            <person name="Wong C."/>
            <person name="Yamamura Y."/>
            <person name="Yuan S."/>
            <person name="Shinozaki K."/>
            <person name="Davis R.W."/>
            <person name="Theologis A."/>
            <person name="Ecker J.R."/>
        </authorList>
    </citation>
    <scope>NUCLEOTIDE SEQUENCE [LARGE SCALE MRNA]</scope>
    <source>
        <strain>cv. Columbia</strain>
    </source>
</reference>
<reference key="4">
    <citation type="submission" date="2006-07" db="EMBL/GenBank/DDBJ databases">
        <title>Large-scale analysis of RIKEN Arabidopsis full-length (RAFL) cDNAs.</title>
        <authorList>
            <person name="Totoki Y."/>
            <person name="Seki M."/>
            <person name="Ishida J."/>
            <person name="Nakajima M."/>
            <person name="Enju A."/>
            <person name="Kamiya A."/>
            <person name="Narusaka M."/>
            <person name="Shin-i T."/>
            <person name="Nakagawa M."/>
            <person name="Sakamoto N."/>
            <person name="Oishi K."/>
            <person name="Kohara Y."/>
            <person name="Kobayashi M."/>
            <person name="Toyoda A."/>
            <person name="Sakaki Y."/>
            <person name="Sakurai T."/>
            <person name="Iida K."/>
            <person name="Akiyama K."/>
            <person name="Satou M."/>
            <person name="Toyoda T."/>
            <person name="Konagaya A."/>
            <person name="Carninci P."/>
            <person name="Kawai J."/>
            <person name="Hayashizaki Y."/>
            <person name="Shinozaki K."/>
        </authorList>
    </citation>
    <scope>NUCLEOTIDE SEQUENCE [LARGE SCALE MRNA]</scope>
    <source>
        <strain>cv. Columbia</strain>
    </source>
</reference>
<reference key="5">
    <citation type="submission" date="2002-03" db="EMBL/GenBank/DDBJ databases">
        <title>Full-length cDNA from Arabidopsis thaliana.</title>
        <authorList>
            <person name="Brover V.V."/>
            <person name="Troukhan M.E."/>
            <person name="Alexandrov N.A."/>
            <person name="Lu Y.-P."/>
            <person name="Flavell R.B."/>
            <person name="Feldmann K.A."/>
        </authorList>
    </citation>
    <scope>NUCLEOTIDE SEQUENCE [LARGE SCALE MRNA]</scope>
</reference>
<reference key="6">
    <citation type="journal article" date="2004" name="Plant Cell">
        <title>Experimental analysis of the Arabidopsis mitochondrial proteome highlights signaling and regulatory components, provides assessment of targeting prediction programs, and indicates plant-specific mitochondrial proteins.</title>
        <authorList>
            <person name="Heazlewood J.L."/>
            <person name="Tonti-Filippini J.S."/>
            <person name="Gout A.M."/>
            <person name="Day D.A."/>
            <person name="Whelan J."/>
            <person name="Millar A.H."/>
        </authorList>
    </citation>
    <scope>IDENTIFICATION BY MASS SPECTROMETRY</scope>
    <scope>SUBCELLULAR LOCATION [LARGE SCALE ANALYSIS]</scope>
    <source>
        <strain>cv. Landsberg erecta</strain>
    </source>
</reference>
<reference key="7">
    <citation type="journal article" date="2004" name="Plant Sci.">
        <title>Characterization of a mutation in the IDH-II subunit of the NAD(+)-dependent isocitrate dehydrogenase from Arabidopsis thaliana.</title>
        <authorList>
            <person name="Lin M."/>
            <person name="Behal R.H."/>
            <person name="Oliver D.J."/>
        </authorList>
        <dbReference type="AGRICOLA" id="IND43633651"/>
    </citation>
    <scope>GENE FAMILY</scope>
</reference>
<reference key="8">
    <citation type="journal article" date="2006" name="Plant Cell Physiol.">
        <title>Expression analysis of Arabidopsis thaliana NAD-dependent isocitrate dehydrogenase genes shows the presence of a functional subunit that is mainly expressed in the pollen and absent from vegetative organs.</title>
        <authorList>
            <person name="Lemaitre T."/>
            <person name="Hodges M."/>
        </authorList>
    </citation>
    <scope>FUNCTION</scope>
    <scope>CATALYTIC ACTIVITY</scope>
    <scope>TISSUE SPECIFICITY</scope>
    <scope>SUBUNIT</scope>
</reference>
<evidence type="ECO:0000250" key="1"/>
<evidence type="ECO:0000250" key="2">
    <source>
        <dbReference type="UniProtKB" id="P50213"/>
    </source>
</evidence>
<evidence type="ECO:0000250" key="3">
    <source>
        <dbReference type="UniProtKB" id="P93032"/>
    </source>
</evidence>
<evidence type="ECO:0000255" key="4"/>
<evidence type="ECO:0000269" key="5">
    <source>
    </source>
</evidence>
<evidence type="ECO:0000269" key="6">
    <source>
    </source>
</evidence>
<evidence type="ECO:0000303" key="7">
    <source>
    </source>
</evidence>
<evidence type="ECO:0000305" key="8"/>
<evidence type="ECO:0000305" key="9">
    <source>
    </source>
</evidence>